<feature type="chain" id="PRO_0000316868" description="Dynein light chain Tctex-type protein 2B">
    <location>
        <begin position="1"/>
        <end position="152"/>
    </location>
</feature>
<protein>
    <recommendedName>
        <fullName evidence="2">Dynein light chain Tctex-type protein 2B</fullName>
    </recommendedName>
    <alternativeName>
        <fullName>Tctex1 domain-containing protein 2</fullName>
    </alternativeName>
</protein>
<evidence type="ECO:0000250" key="1">
    <source>
        <dbReference type="UniProtKB" id="Q8WW35"/>
    </source>
</evidence>
<evidence type="ECO:0000305" key="2"/>
<sequence length="152" mass="17238">MSVAASFPKHTSFTMRASFAAADGLPETENNAGEPENTYILRPVFQQRFRPSVVKDCIHAVLKEELANAEYSPEEMPQLTKHLSENIKDKLKEMGFDRYKMVVQVVIGEQRGEGVFMAARCFWDADTDNCTHDVFMNDSLFCVVAAFGCFYY</sequence>
<name>DYT2B_BOVIN</name>
<comment type="function">
    <text evidence="1">Acts as one of several non-catalytic accessory components of the cytoplasmic dynein 2 complex (dynein-2 complex), a motor protein complex that drives the movement of cargos along microtubules within cilia and flagella in concert with the intraflagellar transport (IFT) system. Required for proper retrograde ciliary transport.</text>
</comment>
<comment type="subunit">
    <text evidence="1">Light chain of the cytoplasmic dynein complex 2, a multisubunit complex composed at least of eleven different proteins. The cytoplasmic dynein 2 complex consists of two catalytic heavy chains (HCs) and a number of non-catalytic subunits presented by intermediate chains (ICs), light intermediate chains (LICs) and light chains (LCs). Among them, a heavy chain (DYNC2H1), two intermediate chains (DYNC2I2 and DYNC2I1), a light intermediate chain (DYNC2LI1), and a light chain (DYNLT2B) are unique to the dynein-2 complex, but a subset of the light chains are also shared by dynein-1 and dynein-2 complexes. The dimer DYNLT2B-DYNLT1/DYNLT3 interacts with DYNC2I1; this interaction is crucial for retrograde trafficking of ciliary proteins.</text>
</comment>
<comment type="subcellular location">
    <subcellularLocation>
        <location evidence="1">Dynein axonemal particle</location>
    </subcellularLocation>
</comment>
<comment type="similarity">
    <text evidence="2">Belongs to the dynein light chain Tctex-type family.</text>
</comment>
<comment type="sequence caution" evidence="2">
    <conflict type="erroneous initiation">
        <sequence resource="EMBL-CDS" id="AAI08236"/>
    </conflict>
    <text>Extended N-terminus.</text>
</comment>
<reference key="1">
    <citation type="submission" date="2005-10" db="EMBL/GenBank/DDBJ databases">
        <authorList>
            <consortium name="NIH - Mammalian Gene Collection (MGC) project"/>
        </authorList>
    </citation>
    <scope>NUCLEOTIDE SEQUENCE [LARGE SCALE MRNA]</scope>
    <source>
        <strain>Crossbred X Angus</strain>
        <tissue>Liver</tissue>
    </source>
</reference>
<gene>
    <name type="primary">DYNLT2B</name>
    <name type="synonym">TCTEX1D2</name>
</gene>
<dbReference type="EMBL" id="BC108235">
    <property type="protein sequence ID" value="AAI08236.1"/>
    <property type="status" value="ALT_INIT"/>
    <property type="molecule type" value="mRNA"/>
</dbReference>
<dbReference type="RefSeq" id="NP_001160027.1">
    <property type="nucleotide sequence ID" value="NM_001166555.1"/>
</dbReference>
<dbReference type="EMDB" id="EMD-50664"/>
<dbReference type="SMR" id="Q32P71"/>
<dbReference type="FunCoup" id="Q32P71">
    <property type="interactions" value="352"/>
</dbReference>
<dbReference type="STRING" id="9913.ENSBTAP00000043713"/>
<dbReference type="PaxDb" id="9913-ENSBTAP00000043713"/>
<dbReference type="GeneID" id="504554"/>
<dbReference type="KEGG" id="bta:504554"/>
<dbReference type="CTD" id="255758"/>
<dbReference type="eggNOG" id="KOG4108">
    <property type="taxonomic scope" value="Eukaryota"/>
</dbReference>
<dbReference type="HOGENOM" id="CLU_097204_8_0_1"/>
<dbReference type="InParanoid" id="Q32P71"/>
<dbReference type="OrthoDB" id="10260741at2759"/>
<dbReference type="TreeFam" id="TF313904"/>
<dbReference type="Proteomes" id="UP000009136">
    <property type="component" value="Unplaced"/>
</dbReference>
<dbReference type="GO" id="GO:0005929">
    <property type="term" value="C:cilium"/>
    <property type="evidence" value="ECO:0007669"/>
    <property type="project" value="GOC"/>
</dbReference>
<dbReference type="GO" id="GO:0005737">
    <property type="term" value="C:cytoplasm"/>
    <property type="evidence" value="ECO:0000318"/>
    <property type="project" value="GO_Central"/>
</dbReference>
<dbReference type="GO" id="GO:0005868">
    <property type="term" value="C:cytoplasmic dynein complex"/>
    <property type="evidence" value="ECO:0000250"/>
    <property type="project" value="UniProtKB"/>
</dbReference>
<dbReference type="GO" id="GO:0120293">
    <property type="term" value="C:dynein axonemal particle"/>
    <property type="evidence" value="ECO:0007669"/>
    <property type="project" value="UniProtKB-SubCell"/>
</dbReference>
<dbReference type="GO" id="GO:0045505">
    <property type="term" value="F:dynein intermediate chain binding"/>
    <property type="evidence" value="ECO:0000318"/>
    <property type="project" value="GO_Central"/>
</dbReference>
<dbReference type="GO" id="GO:0035721">
    <property type="term" value="P:intraciliary retrograde transport"/>
    <property type="evidence" value="ECO:0000250"/>
    <property type="project" value="UniProtKB"/>
</dbReference>
<dbReference type="GO" id="GO:0007018">
    <property type="term" value="P:microtubule-based movement"/>
    <property type="evidence" value="ECO:0000318"/>
    <property type="project" value="GO_Central"/>
</dbReference>
<dbReference type="GO" id="GO:1905799">
    <property type="term" value="P:regulation of intraciliary retrograde transport"/>
    <property type="evidence" value="ECO:0000250"/>
    <property type="project" value="UniProtKB"/>
</dbReference>
<dbReference type="CDD" id="cd21459">
    <property type="entry name" value="DLC-like_TCTEX1D2"/>
    <property type="match status" value="1"/>
</dbReference>
<dbReference type="FunFam" id="3.30.1140.40:FF:000003">
    <property type="entry name" value="tctex1 domain-containing protein 2"/>
    <property type="match status" value="1"/>
</dbReference>
<dbReference type="Gene3D" id="3.30.1140.40">
    <property type="entry name" value="Tctex-1"/>
    <property type="match status" value="1"/>
</dbReference>
<dbReference type="InterPro" id="IPR005334">
    <property type="entry name" value="Tctex-1-like"/>
</dbReference>
<dbReference type="InterPro" id="IPR038586">
    <property type="entry name" value="Tctex-1-like_sf"/>
</dbReference>
<dbReference type="PANTHER" id="PTHR21255:SF7">
    <property type="entry name" value="DYNEIN LIGHT CHAIN TCTEX-TYPE PROTEIN 2B"/>
    <property type="match status" value="1"/>
</dbReference>
<dbReference type="PANTHER" id="PTHR21255">
    <property type="entry name" value="T-COMPLEX-ASSOCIATED-TESTIS-EXPRESSED 1/ DYNEIN LIGHT CHAIN"/>
    <property type="match status" value="1"/>
</dbReference>
<dbReference type="Pfam" id="PF03645">
    <property type="entry name" value="Tctex-1"/>
    <property type="match status" value="1"/>
</dbReference>
<keyword id="KW-0963">Cytoplasm</keyword>
<keyword id="KW-1185">Reference proteome</keyword>
<proteinExistence type="evidence at transcript level"/>
<accession>Q32P71</accession>
<organism>
    <name type="scientific">Bos taurus</name>
    <name type="common">Bovine</name>
    <dbReference type="NCBI Taxonomy" id="9913"/>
    <lineage>
        <taxon>Eukaryota</taxon>
        <taxon>Metazoa</taxon>
        <taxon>Chordata</taxon>
        <taxon>Craniata</taxon>
        <taxon>Vertebrata</taxon>
        <taxon>Euteleostomi</taxon>
        <taxon>Mammalia</taxon>
        <taxon>Eutheria</taxon>
        <taxon>Laurasiatheria</taxon>
        <taxon>Artiodactyla</taxon>
        <taxon>Ruminantia</taxon>
        <taxon>Pecora</taxon>
        <taxon>Bovidae</taxon>
        <taxon>Bovinae</taxon>
        <taxon>Bos</taxon>
    </lineage>
</organism>